<reference key="1">
    <citation type="journal article" date="1998" name="Biochem. J.">
        <title>Plant mitochondrial pyruvate dehydrogenase complex: purification and identification of catalytic components in potato.</title>
        <authorList>
            <person name="Millar A.H."/>
            <person name="Knorpp C."/>
            <person name="Leaver C.J."/>
            <person name="Hill S.A."/>
        </authorList>
    </citation>
    <scope>PROTEIN SEQUENCE</scope>
    <source>
        <strain>cv. Romano</strain>
        <tissue>Tuber</tissue>
    </source>
</reference>
<dbReference type="EC" id="1.2.4.1"/>
<dbReference type="InParanoid" id="P81419"/>
<dbReference type="SABIO-RK" id="P81419"/>
<dbReference type="Proteomes" id="UP000011115">
    <property type="component" value="Unassembled WGS sequence"/>
</dbReference>
<dbReference type="GO" id="GO:0005759">
    <property type="term" value="C:mitochondrial matrix"/>
    <property type="evidence" value="ECO:0007669"/>
    <property type="project" value="UniProtKB-SubCell"/>
</dbReference>
<dbReference type="GO" id="GO:0004739">
    <property type="term" value="F:pyruvate dehydrogenase (acetyl-transferring) activity"/>
    <property type="evidence" value="ECO:0007669"/>
    <property type="project" value="UniProtKB-EC"/>
</dbReference>
<comment type="function">
    <text>The pyruvate dehydrogenase complex catalyzes the overall conversion of pyruvate to acetyl-CoA and CO(2). It contains multiple copies of three enzymatic components: pyruvate dehydrogenase (E1), dihydrolipoamide acetyltransferase (E2) and lipoamide dehydrogenase (E3).</text>
</comment>
<comment type="catalytic activity">
    <reaction>
        <text>N(6)-[(R)-lipoyl]-L-lysyl-[protein] + pyruvate + H(+) = N(6)-[(R)-S(8)-acetyldihydrolipoyl]-L-lysyl-[protein] + CO2</text>
        <dbReference type="Rhea" id="RHEA:19189"/>
        <dbReference type="Rhea" id="RHEA-COMP:10474"/>
        <dbReference type="Rhea" id="RHEA-COMP:10478"/>
        <dbReference type="ChEBI" id="CHEBI:15361"/>
        <dbReference type="ChEBI" id="CHEBI:15378"/>
        <dbReference type="ChEBI" id="CHEBI:16526"/>
        <dbReference type="ChEBI" id="CHEBI:83099"/>
        <dbReference type="ChEBI" id="CHEBI:83111"/>
        <dbReference type="EC" id="1.2.4.1"/>
    </reaction>
</comment>
<comment type="cofactor">
    <cofactor>
        <name>thiamine diphosphate</name>
        <dbReference type="ChEBI" id="CHEBI:58937"/>
    </cofactor>
</comment>
<comment type="subunit">
    <text evidence="1">Tetramer of 2 alpha and 2 beta subunits.</text>
</comment>
<comment type="subcellular location">
    <subcellularLocation>
        <location>Mitochondrion matrix</location>
    </subcellularLocation>
</comment>
<proteinExistence type="evidence at protein level"/>
<keyword id="KW-0903">Direct protein sequencing</keyword>
<keyword id="KW-0496">Mitochondrion</keyword>
<keyword id="KW-0560">Oxidoreductase</keyword>
<keyword id="KW-0597">Phosphoprotein</keyword>
<keyword id="KW-0670">Pyruvate</keyword>
<keyword id="KW-1185">Reference proteome</keyword>
<keyword id="KW-0786">Thiamine pyrophosphate</keyword>
<organism>
    <name type="scientific">Solanum tuberosum</name>
    <name type="common">Potato</name>
    <dbReference type="NCBI Taxonomy" id="4113"/>
    <lineage>
        <taxon>Eukaryota</taxon>
        <taxon>Viridiplantae</taxon>
        <taxon>Streptophyta</taxon>
        <taxon>Embryophyta</taxon>
        <taxon>Tracheophyta</taxon>
        <taxon>Spermatophyta</taxon>
        <taxon>Magnoliopsida</taxon>
        <taxon>eudicotyledons</taxon>
        <taxon>Gunneridae</taxon>
        <taxon>Pentapetalae</taxon>
        <taxon>asterids</taxon>
        <taxon>lamiids</taxon>
        <taxon>Solanales</taxon>
        <taxon>Solanaceae</taxon>
        <taxon>Solanoideae</taxon>
        <taxon>Solaneae</taxon>
        <taxon>Solanum</taxon>
    </lineage>
</organism>
<name>ODPB_SOLTU</name>
<evidence type="ECO:0000250" key="1"/>
<feature type="chain" id="PRO_0000162217" description="Pyruvate dehydrogenase E1 component subunit beta, mitochondrial">
    <location>
        <begin position="1"/>
        <end position="16" status="greater than"/>
    </location>
</feature>
<feature type="non-terminal residue">
    <location>
        <position position="16"/>
    </location>
</feature>
<sequence length="16" mass="1705">ISAVKEMTVRDALNSA</sequence>
<protein>
    <recommendedName>
        <fullName>Pyruvate dehydrogenase E1 component subunit beta, mitochondrial</fullName>
        <shortName>PDHE1-B</shortName>
        <ecNumber>1.2.4.1</ecNumber>
    </recommendedName>
</protein>
<accession>P81419</accession>